<proteinExistence type="evidence at protein level"/>
<name>DHX16_CAEEL</name>
<evidence type="ECO:0000255" key="1">
    <source>
        <dbReference type="PROSITE-ProRule" id="PRU00541"/>
    </source>
</evidence>
<evidence type="ECO:0000255" key="2">
    <source>
        <dbReference type="PROSITE-ProRule" id="PRU00542"/>
    </source>
</evidence>
<evidence type="ECO:0000256" key="3">
    <source>
        <dbReference type="SAM" id="MobiDB-lite"/>
    </source>
</evidence>
<evidence type="ECO:0000269" key="4">
    <source>
    </source>
</evidence>
<evidence type="ECO:0000269" key="5">
    <source>
    </source>
</evidence>
<evidence type="ECO:0000269" key="6">
    <source>
    </source>
</evidence>
<evidence type="ECO:0000269" key="7">
    <source>
    </source>
</evidence>
<evidence type="ECO:0000269" key="8">
    <source>
    </source>
</evidence>
<evidence type="ECO:0000305" key="9"/>
<accession>O45244</accession>
<accession>O45239</accession>
<sequence>MSVEQFINDQLHSIVGISDRSICQYVHALAKKAKSAPDLVEKLRDAGDFPISPAIQSFADQLMSRMPRQATSARQRGPTTAELAEQELNRLNRAVGVLEDYSASSTKTKNVRKRKESSSEDDEAPIKASKPGKSVKPSKSDDSESDIEAMEAKLDADIAERDALAARINKKEKDKTRNVMEKKRDDNKDKEGSSMDKLREESRRQYLKKRKVDKLEELEAIVHDDQTLFAREKLTKREKADMEYRKKVLEYTKAHGKAGDVMKMKRYHLPDASTKQIPSQYVEDDEEDFRPGGDGAKWEEEQLMASMLHLGAKDAKRKEQEFELLLDEKVDFIQALQMPGTNEEVVETEAEKKKMSIEETRKSLPVYAFRDAFIEAVKEHQVLIIEGETGSGKTTQLPQYLYEAGFCEGGKRIGCTQPRRVAAMSVAARVADEVGCKLGTQVGYSIRFEDCTSEKTVLKYMTDGMLLREFLNEPDLASYSVMMIDEAHERTLHTDILFGLVKDIARFRKDLKLLISSATLDAEKFSSFFDDAPIFRIPGRRFPVDIYYTQAPEADYVDAAIVTIMQIHLTQPLPGDILVFLTGQEEIETVQEALMERSKALGSKIKELIPLPVYANLPSDLQAKIFEPTPKDARKVVLATNIAETSVTIDGINYVIDPGFSKQNSFDARSGVEHLHVVTISKAAANQRAGRAGRTGPGKCFRLYTAWAYKHELEEQPIPEIQRTNLGNVVLMLKSLGIHDLVHFDFLDPPPQETLVIALEQLYALGALNHRGELTKLGRRMAEFPCDPCMSKMIIASEKYECSEEIVTIAAMLSCNAAVFYRPKAQVIHADSARKGFWSPAGDHITLMNVYNKWQESSFSQRWCVENYVQHRTMKRARDVRDQLVGLLERVEIETKSSTDTIKIRKAITAGYFYNVSKLDNTGHYKTVKHKHTTHPHPNSCLFEETPRWVVYFELVFTSKEFMREMSEIESGWLLEVAPHYYKGRELEDATNKKMPKNKGKSGKDLER</sequence>
<keyword id="KW-0067">ATP-binding</keyword>
<keyword id="KW-0217">Developmental protein</keyword>
<keyword id="KW-0347">Helicase</keyword>
<keyword id="KW-0378">Hydrolase</keyword>
<keyword id="KW-0507">mRNA processing</keyword>
<keyword id="KW-0508">mRNA splicing</keyword>
<keyword id="KW-0547">Nucleotide-binding</keyword>
<keyword id="KW-0539">Nucleus</keyword>
<keyword id="KW-1185">Reference proteome</keyword>
<feature type="chain" id="PRO_0000055153" description="Probable pre-mRNA-splicing factor ATP-dependent RNA helicase mog-4">
    <location>
        <begin position="1"/>
        <end position="1008"/>
    </location>
</feature>
<feature type="domain" description="Helicase ATP-binding" evidence="1">
    <location>
        <begin position="374"/>
        <end position="538"/>
    </location>
</feature>
<feature type="domain" description="Helicase C-terminal" evidence="2">
    <location>
        <begin position="563"/>
        <end position="737"/>
    </location>
</feature>
<feature type="region of interest" description="Disordered" evidence="3">
    <location>
        <begin position="104"/>
        <end position="146"/>
    </location>
</feature>
<feature type="region of interest" description="Disordered" evidence="3">
    <location>
        <begin position="169"/>
        <end position="202"/>
    </location>
</feature>
<feature type="region of interest" description="Disordered" evidence="3">
    <location>
        <begin position="988"/>
        <end position="1008"/>
    </location>
</feature>
<feature type="short sequence motif" description="DEAH box">
    <location>
        <begin position="485"/>
        <end position="488"/>
    </location>
</feature>
<feature type="compositionally biased region" description="Low complexity" evidence="3">
    <location>
        <begin position="127"/>
        <end position="137"/>
    </location>
</feature>
<feature type="binding site" evidence="1">
    <location>
        <begin position="387"/>
        <end position="394"/>
    </location>
    <ligand>
        <name>ATP</name>
        <dbReference type="ChEBI" id="CHEBI:30616"/>
    </ligand>
</feature>
<dbReference type="EC" id="3.6.4.13"/>
<dbReference type="EMBL" id="AF286900">
    <property type="protein sequence ID" value="AAG01333.1"/>
    <property type="molecule type" value="mRNA"/>
</dbReference>
<dbReference type="EMBL" id="Z81462">
    <property type="protein sequence ID" value="CAB03845.1"/>
    <property type="molecule type" value="Genomic_DNA"/>
</dbReference>
<dbReference type="EMBL" id="Z81457">
    <property type="protein sequence ID" value="CAB03845.1"/>
    <property type="status" value="JOINED"/>
    <property type="molecule type" value="Genomic_DNA"/>
</dbReference>
<dbReference type="PIR" id="T18832">
    <property type="entry name" value="T18832"/>
</dbReference>
<dbReference type="RefSeq" id="NP_497027.1">
    <property type="nucleotide sequence ID" value="NM_064626.6"/>
</dbReference>
<dbReference type="SMR" id="O45244"/>
<dbReference type="BioGRID" id="40398">
    <property type="interactions" value="15"/>
</dbReference>
<dbReference type="DIP" id="DIP-24771N"/>
<dbReference type="FunCoup" id="O45244">
    <property type="interactions" value="2222"/>
</dbReference>
<dbReference type="IntAct" id="O45244">
    <property type="interactions" value="4"/>
</dbReference>
<dbReference type="STRING" id="6239.C04H5.6a.1"/>
<dbReference type="PaxDb" id="6239-C04H5.6a"/>
<dbReference type="PeptideAtlas" id="O45244"/>
<dbReference type="EnsemblMetazoa" id="C04H5.6a.1">
    <property type="protein sequence ID" value="C04H5.6a.1"/>
    <property type="gene ID" value="WBGene00003392"/>
</dbReference>
<dbReference type="GeneID" id="175117"/>
<dbReference type="KEGG" id="cel:CELE_C04H5.6"/>
<dbReference type="UCSC" id="C04H5.6">
    <property type="organism name" value="c. elegans"/>
</dbReference>
<dbReference type="AGR" id="WB:WBGene00003392"/>
<dbReference type="CTD" id="175117"/>
<dbReference type="WormBase" id="C04H5.6a">
    <property type="protein sequence ID" value="CE15592"/>
    <property type="gene ID" value="WBGene00003392"/>
    <property type="gene designation" value="mog-4"/>
</dbReference>
<dbReference type="eggNOG" id="KOG0923">
    <property type="taxonomic scope" value="Eukaryota"/>
</dbReference>
<dbReference type="HOGENOM" id="CLU_001832_7_1_1"/>
<dbReference type="InParanoid" id="O45244"/>
<dbReference type="OMA" id="PLDPMMS"/>
<dbReference type="OrthoDB" id="10253254at2759"/>
<dbReference type="PhylomeDB" id="O45244"/>
<dbReference type="SignaLink" id="O45244"/>
<dbReference type="PRO" id="PR:O45244"/>
<dbReference type="Proteomes" id="UP000001940">
    <property type="component" value="Chromosome II"/>
</dbReference>
<dbReference type="Bgee" id="WBGene00003392">
    <property type="expression patterns" value="Expressed in adult organism and 4 other cell types or tissues"/>
</dbReference>
<dbReference type="ExpressionAtlas" id="O45244">
    <property type="expression patterns" value="baseline and differential"/>
</dbReference>
<dbReference type="GO" id="GO:0005634">
    <property type="term" value="C:nucleus"/>
    <property type="evidence" value="ECO:0007669"/>
    <property type="project" value="UniProtKB-SubCell"/>
</dbReference>
<dbReference type="GO" id="GO:0005524">
    <property type="term" value="F:ATP binding"/>
    <property type="evidence" value="ECO:0007669"/>
    <property type="project" value="UniProtKB-KW"/>
</dbReference>
<dbReference type="GO" id="GO:0016887">
    <property type="term" value="F:ATP hydrolysis activity"/>
    <property type="evidence" value="ECO:0007669"/>
    <property type="project" value="RHEA"/>
</dbReference>
<dbReference type="GO" id="GO:0004386">
    <property type="term" value="F:helicase activity"/>
    <property type="evidence" value="ECO:0000318"/>
    <property type="project" value="GO_Central"/>
</dbReference>
<dbReference type="GO" id="GO:0003723">
    <property type="term" value="F:RNA binding"/>
    <property type="evidence" value="ECO:0000318"/>
    <property type="project" value="GO_Central"/>
</dbReference>
<dbReference type="GO" id="GO:0003724">
    <property type="term" value="F:RNA helicase activity"/>
    <property type="evidence" value="ECO:0007669"/>
    <property type="project" value="UniProtKB-EC"/>
</dbReference>
<dbReference type="GO" id="GO:0048589">
    <property type="term" value="P:developmental growth"/>
    <property type="evidence" value="ECO:0000315"/>
    <property type="project" value="WormBase"/>
</dbReference>
<dbReference type="GO" id="GO:0010172">
    <property type="term" value="P:embryonic body morphogenesis"/>
    <property type="evidence" value="ECO:0000315"/>
    <property type="project" value="WormBase"/>
</dbReference>
<dbReference type="GO" id="GO:0040022">
    <property type="term" value="P:feminization of hermaphroditic germ-line"/>
    <property type="evidence" value="ECO:0000315"/>
    <property type="project" value="WormBase"/>
</dbReference>
<dbReference type="GO" id="GO:0007281">
    <property type="term" value="P:germ cell development"/>
    <property type="evidence" value="ECO:0000315"/>
    <property type="project" value="WormBase"/>
</dbReference>
<dbReference type="GO" id="GO:0006397">
    <property type="term" value="P:mRNA processing"/>
    <property type="evidence" value="ECO:0007669"/>
    <property type="project" value="UniProtKB-KW"/>
</dbReference>
<dbReference type="GO" id="GO:0008380">
    <property type="term" value="P:RNA splicing"/>
    <property type="evidence" value="ECO:0007669"/>
    <property type="project" value="UniProtKB-KW"/>
</dbReference>
<dbReference type="CDD" id="cd17974">
    <property type="entry name" value="DEXHc_DHX16"/>
    <property type="match status" value="1"/>
</dbReference>
<dbReference type="CDD" id="cd18791">
    <property type="entry name" value="SF2_C_RHA"/>
    <property type="match status" value="1"/>
</dbReference>
<dbReference type="FunFam" id="1.20.120.1080:FF:000001">
    <property type="entry name" value="Pre-mRNA-splicing factor ATP-dependent RNA helicase"/>
    <property type="match status" value="1"/>
</dbReference>
<dbReference type="FunFam" id="3.40.50.300:FF:000007">
    <property type="entry name" value="Pre-mRNA-splicing factor ATP-dependent RNA helicase"/>
    <property type="match status" value="1"/>
</dbReference>
<dbReference type="FunFam" id="3.40.50.300:FF:000594">
    <property type="entry name" value="Pre-mRNA-splicing factor ATP-dependent RNA helicase"/>
    <property type="match status" value="1"/>
</dbReference>
<dbReference type="Gene3D" id="1.20.120.1080">
    <property type="match status" value="1"/>
</dbReference>
<dbReference type="Gene3D" id="3.40.50.300">
    <property type="entry name" value="P-loop containing nucleotide triphosphate hydrolases"/>
    <property type="match status" value="2"/>
</dbReference>
<dbReference type="InterPro" id="IPR011709">
    <property type="entry name" value="DEAD-box_helicase_OB_fold"/>
</dbReference>
<dbReference type="InterPro" id="IPR011545">
    <property type="entry name" value="DEAD/DEAH_box_helicase_dom"/>
</dbReference>
<dbReference type="InterPro" id="IPR002464">
    <property type="entry name" value="DNA/RNA_helicase_DEAH_CS"/>
</dbReference>
<dbReference type="InterPro" id="IPR048333">
    <property type="entry name" value="HA2_WH"/>
</dbReference>
<dbReference type="InterPro" id="IPR007502">
    <property type="entry name" value="Helicase-assoc_dom"/>
</dbReference>
<dbReference type="InterPro" id="IPR014001">
    <property type="entry name" value="Helicase_ATP-bd"/>
</dbReference>
<dbReference type="InterPro" id="IPR001650">
    <property type="entry name" value="Helicase_C-like"/>
</dbReference>
<dbReference type="InterPro" id="IPR027417">
    <property type="entry name" value="P-loop_NTPase"/>
</dbReference>
<dbReference type="PANTHER" id="PTHR18934">
    <property type="entry name" value="ATP-DEPENDENT RNA HELICASE"/>
    <property type="match status" value="1"/>
</dbReference>
<dbReference type="PANTHER" id="PTHR18934:SF83">
    <property type="entry name" value="PRE-MRNA-SPLICING FACTOR ATP-DEPENDENT RNA HELICASE DHX16"/>
    <property type="match status" value="1"/>
</dbReference>
<dbReference type="Pfam" id="PF00270">
    <property type="entry name" value="DEAD"/>
    <property type="match status" value="1"/>
</dbReference>
<dbReference type="Pfam" id="PF21010">
    <property type="entry name" value="HA2_C"/>
    <property type="match status" value="1"/>
</dbReference>
<dbReference type="Pfam" id="PF04408">
    <property type="entry name" value="HA2_N"/>
    <property type="match status" value="1"/>
</dbReference>
<dbReference type="Pfam" id="PF00271">
    <property type="entry name" value="Helicase_C"/>
    <property type="match status" value="1"/>
</dbReference>
<dbReference type="Pfam" id="PF07717">
    <property type="entry name" value="OB_NTP_bind"/>
    <property type="match status" value="1"/>
</dbReference>
<dbReference type="SMART" id="SM00487">
    <property type="entry name" value="DEXDc"/>
    <property type="match status" value="1"/>
</dbReference>
<dbReference type="SMART" id="SM00847">
    <property type="entry name" value="HA2"/>
    <property type="match status" value="1"/>
</dbReference>
<dbReference type="SMART" id="SM00490">
    <property type="entry name" value="HELICc"/>
    <property type="match status" value="1"/>
</dbReference>
<dbReference type="SUPFAM" id="SSF52540">
    <property type="entry name" value="P-loop containing nucleoside triphosphate hydrolases"/>
    <property type="match status" value="1"/>
</dbReference>
<dbReference type="PROSITE" id="PS00690">
    <property type="entry name" value="DEAH_ATP_HELICASE"/>
    <property type="match status" value="1"/>
</dbReference>
<dbReference type="PROSITE" id="PS51192">
    <property type="entry name" value="HELICASE_ATP_BIND_1"/>
    <property type="match status" value="1"/>
</dbReference>
<dbReference type="PROSITE" id="PS51194">
    <property type="entry name" value="HELICASE_CTER"/>
    <property type="match status" value="1"/>
</dbReference>
<reference key="1">
    <citation type="journal article" date="2000" name="Proc. Natl. Acad. Sci. U.S.A.">
        <title>The hermaphrodite sperm/oocyte switch requires the Caenorhabditis elegans homologs of PRP2 and PRP22.</title>
        <authorList>
            <person name="Puoti A."/>
            <person name="Kimble J."/>
        </authorList>
    </citation>
    <scope>NUCLEOTIDE SEQUENCE [MRNA]</scope>
    <scope>PROBABLE FUNCTION</scope>
    <scope>DEVELOPMENTAL STAGE</scope>
    <scope>DISRUPTION PHENOTYPE</scope>
</reference>
<reference key="2">
    <citation type="journal article" date="1998" name="Science">
        <title>Genome sequence of the nematode C. elegans: a platform for investigating biology.</title>
        <authorList>
            <consortium name="The C. elegans sequencing consortium"/>
        </authorList>
    </citation>
    <scope>NUCLEOTIDE SEQUENCE [LARGE SCALE GENOMIC DNA]</scope>
    <source>
        <strain>Bristol N2</strain>
    </source>
</reference>
<reference key="3">
    <citation type="journal article" date="1993" name="Dev. Genet.">
        <title>More mog genes that influence the switch from spermatogenesis to oogenesis in the hermaphrodite germ line of Caenorhabditis elegans.</title>
        <authorList>
            <person name="Graham P.L."/>
            <person name="Schedl T."/>
            <person name="Kimble J."/>
        </authorList>
    </citation>
    <scope>DISRUPTION PHENOTYPE</scope>
</reference>
<reference key="4">
    <citation type="journal article" date="2002" name="RNA">
        <title>The MEP-1 zinc-finger protein acts with MOG DEAH box proteins to control gene expression via the fem-3 3' untranslated region in Caenorhabditis elegans.</title>
        <authorList>
            <person name="Belfiore M."/>
            <person name="Mathies L.D."/>
            <person name="Pugnale P."/>
            <person name="Moulder G."/>
            <person name="Barstead R."/>
            <person name="Kimble J."/>
            <person name="Puoti A."/>
        </authorList>
    </citation>
    <scope>INTERACTION WITH MEP-1</scope>
    <scope>DEVELOPMENTAL STAGE</scope>
    <scope>DISRUPTION PHENOTYPE</scope>
</reference>
<reference key="5">
    <citation type="journal article" date="2006" name="Invertebr. Neurosci.">
        <title>Caenorhabditis elegans in the study of SMN-interacting proteins: a role for SMI-1, an orthologue of human Gemin2 and the identification of novel components of the SMN complex.</title>
        <authorList>
            <person name="Burt E.C."/>
            <person name="Towers P.R."/>
            <person name="Sattelle D.B."/>
        </authorList>
    </citation>
    <scope>INTERACTION WITH SMN-1</scope>
</reference>
<reference key="6">
    <citation type="journal article" date="2008" name="Dev. Dyn.">
        <title>The Caenorhabditis elegans DDX-23, a homolog of yeast splicing factor PRP28, is required for the sperm-oocyte switch and differentiation of various cell types.</title>
        <authorList>
            <person name="Konishi T."/>
            <person name="Uodome N."/>
            <person name="Sugimoto A."/>
        </authorList>
    </citation>
    <scope>DISRUPTION PHENOTYPE</scope>
</reference>
<comment type="function">
    <text evidence="9">ATP-binding RNA helicase involved in pre-mRNA splicing (Probable). Operates during embryogenesis.</text>
</comment>
<comment type="catalytic activity">
    <reaction>
        <text>ATP + H2O = ADP + phosphate + H(+)</text>
        <dbReference type="Rhea" id="RHEA:13065"/>
        <dbReference type="ChEBI" id="CHEBI:15377"/>
        <dbReference type="ChEBI" id="CHEBI:15378"/>
        <dbReference type="ChEBI" id="CHEBI:30616"/>
        <dbReference type="ChEBI" id="CHEBI:43474"/>
        <dbReference type="ChEBI" id="CHEBI:456216"/>
        <dbReference type="EC" id="3.6.4.13"/>
    </reaction>
</comment>
<comment type="subunit">
    <text evidence="5 6">Interacts with mep-1 and smn-1.</text>
</comment>
<comment type="interaction">
    <interactant intactId="EBI-326143">
        <id>O45244</id>
    </interactant>
    <interactant intactId="EBI-319858">
        <id>Q21502</id>
        <label>mep-1</label>
    </interactant>
    <organismsDiffer>false</organismsDiffer>
    <experiments>2</experiments>
</comment>
<comment type="interaction">
    <interactant intactId="EBI-326143">
        <id>O45244</id>
    </interactant>
    <interactant intactId="EBI-3651301">
        <id>P34498</id>
        <label>mog-1</label>
    </interactant>
    <organismsDiffer>false</organismsDiffer>
    <experiments>2</experiments>
</comment>
<comment type="subcellular location">
    <subcellularLocation>
        <location evidence="9">Nucleus</location>
    </subcellularLocation>
</comment>
<comment type="developmental stage">
    <text evidence="4 5">Expressed throughout development but most strongly in embryos and the L4 larvae stage.</text>
</comment>
<comment type="disruption phenotype">
    <text evidence="4 5 7 8">Embryonic lethal. Defects in oocytogenesis and spermatogenesis. Approximately 80% of mutants have an abnormal somatic gonad and no vulva.</text>
</comment>
<comment type="similarity">
    <text evidence="9">Belongs to the DEAD box helicase family. DEAH subfamily. DDX16/PRP8 sub-subfamily.</text>
</comment>
<protein>
    <recommendedName>
        <fullName>Probable pre-mRNA-splicing factor ATP-dependent RNA helicase mog-4</fullName>
        <ecNumber>3.6.4.13</ecNumber>
    </recommendedName>
    <alternativeName>
        <fullName>Masculinization of germline protein 4</fullName>
    </alternativeName>
    <alternativeName>
        <fullName>Sex determination protein mog-4</fullName>
    </alternativeName>
</protein>
<gene>
    <name type="primary">mog-4</name>
    <name type="ORF">C04H5.6</name>
</gene>
<organism>
    <name type="scientific">Caenorhabditis elegans</name>
    <dbReference type="NCBI Taxonomy" id="6239"/>
    <lineage>
        <taxon>Eukaryota</taxon>
        <taxon>Metazoa</taxon>
        <taxon>Ecdysozoa</taxon>
        <taxon>Nematoda</taxon>
        <taxon>Chromadorea</taxon>
        <taxon>Rhabditida</taxon>
        <taxon>Rhabditina</taxon>
        <taxon>Rhabditomorpha</taxon>
        <taxon>Rhabditoidea</taxon>
        <taxon>Rhabditidae</taxon>
        <taxon>Peloderinae</taxon>
        <taxon>Caenorhabditis</taxon>
    </lineage>
</organism>